<proteinExistence type="evidence at transcript level"/>
<comment type="function">
    <text evidence="1 3">Palmitoyltransferase that could catalyze the addition of palmitate onto various protein substrates and be involved in a variety of cellular processes (By similarity). Catalyzes the palmitoylation of KCNMA1, regulating localization of KCNMA1 to the plasma membrane (By similarity). Might also mediate palmitoylation of CNN3 (By similarity).</text>
</comment>
<comment type="catalytic activity">
    <reaction evidence="3">
        <text>L-cysteinyl-[protein] + hexadecanoyl-CoA = S-hexadecanoyl-L-cysteinyl-[protein] + CoA</text>
        <dbReference type="Rhea" id="RHEA:36683"/>
        <dbReference type="Rhea" id="RHEA-COMP:10131"/>
        <dbReference type="Rhea" id="RHEA-COMP:11032"/>
        <dbReference type="ChEBI" id="CHEBI:29950"/>
        <dbReference type="ChEBI" id="CHEBI:57287"/>
        <dbReference type="ChEBI" id="CHEBI:57379"/>
        <dbReference type="ChEBI" id="CHEBI:74151"/>
        <dbReference type="EC" id="2.3.1.225"/>
    </reaction>
    <physiologicalReaction direction="left-to-right" evidence="3">
        <dbReference type="Rhea" id="RHEA:36684"/>
    </physiologicalReaction>
</comment>
<comment type="subunit">
    <text evidence="1">Interacts with CNN3.</text>
</comment>
<comment type="subcellular location">
    <subcellularLocation>
        <location evidence="3">Endoplasmic reticulum membrane</location>
        <topology evidence="4">Multi-pass membrane protein</topology>
    </subcellularLocation>
    <subcellularLocation>
        <location evidence="3">Golgi apparatus membrane</location>
        <topology evidence="4">Multi-pass membrane protein</topology>
    </subcellularLocation>
</comment>
<comment type="domain">
    <text evidence="2">The DHHC domain is required for palmitoyltransferase activity.</text>
</comment>
<comment type="similarity">
    <text evidence="6">Belongs to the DHHC palmitoyltransferase family.</text>
</comment>
<protein>
    <recommendedName>
        <fullName evidence="6">Palmitoyltransferase ZDHHC22</fullName>
        <ecNumber evidence="3">2.3.1.225</ecNumber>
    </recommendedName>
    <alternativeName>
        <fullName evidence="7">Zinc finger DHHC domain-containing protein 22</fullName>
        <shortName>DHHC-22</shortName>
        <shortName>zDHHC22</shortName>
    </alternativeName>
</protein>
<dbReference type="EC" id="2.3.1.225" evidence="3"/>
<dbReference type="EMBL" id="AY886537">
    <property type="protein sequence ID" value="AAX73399.1"/>
    <property type="molecule type" value="mRNA"/>
</dbReference>
<dbReference type="RefSeq" id="NP_001034414.1">
    <property type="nucleotide sequence ID" value="NM_001039325.2"/>
</dbReference>
<dbReference type="RefSeq" id="XP_038967985.1">
    <property type="nucleotide sequence ID" value="XM_039112057.2"/>
</dbReference>
<dbReference type="RefSeq" id="XP_038967986.1">
    <property type="nucleotide sequence ID" value="XM_039112058.2"/>
</dbReference>
<dbReference type="FunCoup" id="Q2TGI8">
    <property type="interactions" value="11"/>
</dbReference>
<dbReference type="STRING" id="10116.ENSRNOP00000054651"/>
<dbReference type="PaxDb" id="10116-ENSRNOP00000054651"/>
<dbReference type="Ensembl" id="ENSRNOT00000015046.7">
    <property type="protein sequence ID" value="ENSRNOP00000054651.2"/>
    <property type="gene ID" value="ENSRNOG00000011285.7"/>
</dbReference>
<dbReference type="GeneID" id="299211"/>
<dbReference type="KEGG" id="rno:299211"/>
<dbReference type="UCSC" id="RGD:1308446">
    <property type="organism name" value="rat"/>
</dbReference>
<dbReference type="AGR" id="RGD:1308446"/>
<dbReference type="CTD" id="283576"/>
<dbReference type="RGD" id="1308446">
    <property type="gene designation" value="Zdhhc22"/>
</dbReference>
<dbReference type="eggNOG" id="KOG1311">
    <property type="taxonomic scope" value="Eukaryota"/>
</dbReference>
<dbReference type="GeneTree" id="ENSGT00730000111268"/>
<dbReference type="HOGENOM" id="CLU_027721_5_3_1"/>
<dbReference type="InParanoid" id="Q2TGI8"/>
<dbReference type="OMA" id="GQTWCQL"/>
<dbReference type="OrthoDB" id="302728at2759"/>
<dbReference type="PhylomeDB" id="Q2TGI8"/>
<dbReference type="TreeFam" id="TF342115"/>
<dbReference type="PRO" id="PR:Q2TGI8"/>
<dbReference type="Proteomes" id="UP000002494">
    <property type="component" value="Chromosome 6"/>
</dbReference>
<dbReference type="Bgee" id="ENSRNOG00000011285">
    <property type="expression patterns" value="Expressed in frontal cortex and 1 other cell type or tissue"/>
</dbReference>
<dbReference type="GO" id="GO:0005783">
    <property type="term" value="C:endoplasmic reticulum"/>
    <property type="evidence" value="ECO:0000266"/>
    <property type="project" value="RGD"/>
</dbReference>
<dbReference type="GO" id="GO:0005789">
    <property type="term" value="C:endoplasmic reticulum membrane"/>
    <property type="evidence" value="ECO:0007669"/>
    <property type="project" value="UniProtKB-SubCell"/>
</dbReference>
<dbReference type="GO" id="GO:0005794">
    <property type="term" value="C:Golgi apparatus"/>
    <property type="evidence" value="ECO:0000266"/>
    <property type="project" value="RGD"/>
</dbReference>
<dbReference type="GO" id="GO:0000139">
    <property type="term" value="C:Golgi membrane"/>
    <property type="evidence" value="ECO:0007669"/>
    <property type="project" value="UniProtKB-SubCell"/>
</dbReference>
<dbReference type="GO" id="GO:0005886">
    <property type="term" value="C:plasma membrane"/>
    <property type="evidence" value="ECO:0007669"/>
    <property type="project" value="Ensembl"/>
</dbReference>
<dbReference type="GO" id="GO:0019706">
    <property type="term" value="F:protein-cysteine S-palmitoyltransferase activity"/>
    <property type="evidence" value="ECO:0000318"/>
    <property type="project" value="GO_Central"/>
</dbReference>
<dbReference type="GO" id="GO:0072659">
    <property type="term" value="P:protein localization to plasma membrane"/>
    <property type="evidence" value="ECO:0000266"/>
    <property type="project" value="RGD"/>
</dbReference>
<dbReference type="GO" id="GO:0006612">
    <property type="term" value="P:protein targeting to membrane"/>
    <property type="evidence" value="ECO:0000318"/>
    <property type="project" value="GO_Central"/>
</dbReference>
<dbReference type="InterPro" id="IPR001594">
    <property type="entry name" value="Palmitoyltrfase_DHHC"/>
</dbReference>
<dbReference type="InterPro" id="IPR039859">
    <property type="entry name" value="PFA4/ZDH16/20/ERF2-like"/>
</dbReference>
<dbReference type="InterPro" id="IPR000731">
    <property type="entry name" value="SSD"/>
</dbReference>
<dbReference type="PANTHER" id="PTHR12246">
    <property type="entry name" value="PALMITOYLTRANSFERASE ZDHHC16"/>
    <property type="match status" value="1"/>
</dbReference>
<dbReference type="Pfam" id="PF01529">
    <property type="entry name" value="DHHC"/>
    <property type="match status" value="1"/>
</dbReference>
<dbReference type="PROSITE" id="PS50216">
    <property type="entry name" value="DHHC"/>
    <property type="match status" value="1"/>
</dbReference>
<dbReference type="PROSITE" id="PS50156">
    <property type="entry name" value="SSD"/>
    <property type="match status" value="1"/>
</dbReference>
<keyword id="KW-0012">Acyltransferase</keyword>
<keyword id="KW-0256">Endoplasmic reticulum</keyword>
<keyword id="KW-0333">Golgi apparatus</keyword>
<keyword id="KW-0449">Lipoprotein</keyword>
<keyword id="KW-0472">Membrane</keyword>
<keyword id="KW-0564">Palmitate</keyword>
<keyword id="KW-1185">Reference proteome</keyword>
<keyword id="KW-0808">Transferase</keyword>
<keyword id="KW-0812">Transmembrane</keyword>
<keyword id="KW-1133">Transmembrane helix</keyword>
<organism>
    <name type="scientific">Rattus norvegicus</name>
    <name type="common">Rat</name>
    <dbReference type="NCBI Taxonomy" id="10116"/>
    <lineage>
        <taxon>Eukaryota</taxon>
        <taxon>Metazoa</taxon>
        <taxon>Chordata</taxon>
        <taxon>Craniata</taxon>
        <taxon>Vertebrata</taxon>
        <taxon>Euteleostomi</taxon>
        <taxon>Mammalia</taxon>
        <taxon>Eutheria</taxon>
        <taxon>Euarchontoglires</taxon>
        <taxon>Glires</taxon>
        <taxon>Rodentia</taxon>
        <taxon>Myomorpha</taxon>
        <taxon>Muroidea</taxon>
        <taxon>Muridae</taxon>
        <taxon>Murinae</taxon>
        <taxon>Rattus</taxon>
    </lineage>
</organism>
<sequence length="263" mass="29249">MLALRLLNVVAPAYFLCISLVTFVLQLFLFLPSMREDPTATPLFSPAVLHGALFLFLSANALGNYILVVQNSPDDLGACQGTSSQRPQRPPPSTHFCRVCARVTLRHDHHCFFTGNCIGSRNMRNFILFCLYTSLACLYSMVAGVAYISAVLSISFAHPLAFLTLLPTSISQFFSGAVLGSDMFVILMLYLWFAVGLACAGFCCHQLLLILRGQTRYQVRKGVAVRARPWRKNLQEVFGKRWLLGLLVPMFNVGTESSKQQDK</sequence>
<accession>Q2TGI8</accession>
<reference key="1">
    <citation type="submission" date="2005-01" db="EMBL/GenBank/DDBJ databases">
        <title>A superfamily of membrane-associated DHHC type zinc finger proteins.</title>
        <authorList>
            <person name="Huang C.-H."/>
            <person name="Chen Y."/>
            <person name="Ye T."/>
        </authorList>
    </citation>
    <scope>NUCLEOTIDE SEQUENCE [MRNA]</scope>
</reference>
<gene>
    <name evidence="7" type="primary">Zdhhc22</name>
</gene>
<name>ZDH22_RAT</name>
<feature type="chain" id="PRO_0000278773" description="Palmitoyltransferase ZDHHC22">
    <location>
        <begin position="1"/>
        <end position="263"/>
    </location>
</feature>
<feature type="topological domain" description="Cytoplasmic" evidence="6">
    <location>
        <begin position="1"/>
        <end position="9"/>
    </location>
</feature>
<feature type="transmembrane region" description="Helical" evidence="4">
    <location>
        <begin position="10"/>
        <end position="30"/>
    </location>
</feature>
<feature type="topological domain" description="Lumenal" evidence="6">
    <location>
        <begin position="31"/>
        <end position="47"/>
    </location>
</feature>
<feature type="transmembrane region" description="Helical" evidence="4">
    <location>
        <begin position="48"/>
        <end position="68"/>
    </location>
</feature>
<feature type="topological domain" description="Cytoplasmic" evidence="6">
    <location>
        <begin position="69"/>
        <end position="125"/>
    </location>
</feature>
<feature type="transmembrane region" description="Helical" evidence="4">
    <location>
        <begin position="126"/>
        <end position="146"/>
    </location>
</feature>
<feature type="transmembrane region" description="Helical" evidence="4">
    <location>
        <begin position="147"/>
        <end position="167"/>
    </location>
</feature>
<feature type="topological domain" description="Cytoplasmic" evidence="6">
    <location>
        <begin position="168"/>
        <end position="182"/>
    </location>
</feature>
<feature type="transmembrane region" description="Helical" evidence="4">
    <location>
        <begin position="183"/>
        <end position="203"/>
    </location>
</feature>
<feature type="topological domain" description="Lumenal" evidence="6">
    <location>
        <begin position="204"/>
        <end position="263"/>
    </location>
</feature>
<feature type="domain" description="DHHC" evidence="5">
    <location>
        <begin position="91"/>
        <end position="131"/>
    </location>
</feature>
<feature type="active site" description="S-palmitoyl cysteine intermediate" evidence="5">
    <location>
        <position position="111"/>
    </location>
</feature>
<evidence type="ECO:0000250" key="1">
    <source>
        <dbReference type="UniProtKB" id="A0PK84"/>
    </source>
</evidence>
<evidence type="ECO:0000250" key="2">
    <source>
        <dbReference type="UniProtKB" id="Q8IUH5"/>
    </source>
</evidence>
<evidence type="ECO:0000250" key="3">
    <source>
        <dbReference type="UniProtKB" id="Q8N966"/>
    </source>
</evidence>
<evidence type="ECO:0000255" key="4"/>
<evidence type="ECO:0000255" key="5">
    <source>
        <dbReference type="PROSITE-ProRule" id="PRU00067"/>
    </source>
</evidence>
<evidence type="ECO:0000305" key="6"/>
<evidence type="ECO:0000312" key="7">
    <source>
        <dbReference type="RGD" id="1308446"/>
    </source>
</evidence>